<geneLocation type="mitochondrion"/>
<organism>
    <name type="scientific">Brettanomyces custersianus</name>
    <name type="common">Yeast</name>
    <dbReference type="NCBI Taxonomy" id="13368"/>
    <lineage>
        <taxon>Eukaryota</taxon>
        <taxon>Fungi</taxon>
        <taxon>Dikarya</taxon>
        <taxon>Ascomycota</taxon>
        <taxon>Saccharomycotina</taxon>
        <taxon>Pichiomycetes</taxon>
        <taxon>Pichiales</taxon>
        <taxon>Pichiaceae</taxon>
        <taxon>Brettanomyces</taxon>
    </lineage>
</organism>
<name>COX2_BRECS</name>
<evidence type="ECO:0000250" key="1">
    <source>
        <dbReference type="UniProtKB" id="P00410"/>
    </source>
</evidence>
<evidence type="ECO:0000255" key="2"/>
<evidence type="ECO:0000305" key="3"/>
<feature type="chain" id="PRO_0000183522" description="Cytochrome c oxidase subunit 2">
    <location>
        <begin position="1"/>
        <end position="247"/>
    </location>
</feature>
<feature type="topological domain" description="Mitochondrial intermembrane" evidence="2">
    <location>
        <begin position="1"/>
        <end position="38"/>
    </location>
</feature>
<feature type="transmembrane region" description="Helical" evidence="2">
    <location>
        <begin position="39"/>
        <end position="58"/>
    </location>
</feature>
<feature type="topological domain" description="Mitochondrial matrix" evidence="2">
    <location>
        <begin position="59"/>
        <end position="78"/>
    </location>
</feature>
<feature type="transmembrane region" description="Helical" evidence="2">
    <location>
        <begin position="79"/>
        <end position="103"/>
    </location>
</feature>
<feature type="topological domain" description="Mitochondrial intermembrane" evidence="2">
    <location>
        <begin position="104"/>
        <end position="247"/>
    </location>
</feature>
<feature type="binding site" evidence="1">
    <location>
        <position position="182"/>
    </location>
    <ligand>
        <name>Cu cation</name>
        <dbReference type="ChEBI" id="CHEBI:23378"/>
        <label>A1</label>
    </ligand>
</feature>
<feature type="binding site" evidence="1">
    <location>
        <position position="217"/>
    </location>
    <ligand>
        <name>Cu cation</name>
        <dbReference type="ChEBI" id="CHEBI:23378"/>
        <label>A1</label>
    </ligand>
</feature>
<feature type="binding site" evidence="1">
    <location>
        <position position="217"/>
    </location>
    <ligand>
        <name>Cu cation</name>
        <dbReference type="ChEBI" id="CHEBI:23378"/>
        <label>A2</label>
    </ligand>
</feature>
<feature type="binding site" evidence="1">
    <location>
        <position position="219"/>
    </location>
    <ligand>
        <name>Cu cation</name>
        <dbReference type="ChEBI" id="CHEBI:23378"/>
        <label>A2</label>
    </ligand>
</feature>
<feature type="binding site" evidence="1">
    <location>
        <position position="219"/>
    </location>
    <ligand>
        <name>Mg(2+)</name>
        <dbReference type="ChEBI" id="CHEBI:18420"/>
        <note>ligand shared with subunit 1</note>
    </ligand>
</feature>
<feature type="binding site" evidence="1">
    <location>
        <position position="221"/>
    </location>
    <ligand>
        <name>Cu cation</name>
        <dbReference type="ChEBI" id="CHEBI:23378"/>
        <label>A1</label>
    </ligand>
</feature>
<feature type="binding site" evidence="1">
    <location>
        <position position="221"/>
    </location>
    <ligand>
        <name>Cu cation</name>
        <dbReference type="ChEBI" id="CHEBI:23378"/>
        <label>A2</label>
    </ligand>
</feature>
<feature type="binding site" evidence="1">
    <location>
        <position position="225"/>
    </location>
    <ligand>
        <name>Cu cation</name>
        <dbReference type="ChEBI" id="CHEBI:23378"/>
        <label>A2</label>
    </ligand>
</feature>
<feature type="binding site" evidence="1">
    <location>
        <position position="228"/>
    </location>
    <ligand>
        <name>Cu cation</name>
        <dbReference type="ChEBI" id="CHEBI:23378"/>
        <label>A1</label>
    </ligand>
</feature>
<keyword id="KW-0186">Copper</keyword>
<keyword id="KW-0249">Electron transport</keyword>
<keyword id="KW-0460">Magnesium</keyword>
<keyword id="KW-0472">Membrane</keyword>
<keyword id="KW-0479">Metal-binding</keyword>
<keyword id="KW-0496">Mitochondrion</keyword>
<keyword id="KW-0999">Mitochondrion inner membrane</keyword>
<keyword id="KW-0679">Respiratory chain</keyword>
<keyword id="KW-1278">Translocase</keyword>
<keyword id="KW-0812">Transmembrane</keyword>
<keyword id="KW-1133">Transmembrane helix</keyword>
<keyword id="KW-0813">Transport</keyword>
<comment type="function">
    <text evidence="1">Component of the cytochrome c oxidase, the last enzyme in the mitochondrial electron transport chain which drives oxidative phosphorylation. The respiratory chain contains 3 multisubunit complexes succinate dehydrogenase (complex II, CII), ubiquinol-cytochrome c oxidoreductase (cytochrome b-c1 complex, complex III, CIII) and cytochrome c oxidase (complex IV, CIV), that cooperate to transfer electrons derived from NADH and succinate to molecular oxygen, creating an electrochemical gradient over the inner membrane that drives transmembrane transport and the ATP synthase. Cytochrome c oxidase is the component of the respiratory chain that catalyzes the reduction of oxygen to water. Electrons originating from reduced cytochrome c in the intermembrane space (IMS) are transferred via the dinuclear copper A center (CU(A)) of subunit 2 and heme A of subunit 1 to the active site in subunit 1, a binuclear center (BNC) formed by heme A3 and copper B (CU(B)). The BNC reduces molecular oxygen to 2 water molecules using 4 electrons from cytochrome c in the IMS and 4 protons from the mitochondrial matrix.</text>
</comment>
<comment type="catalytic activity">
    <reaction evidence="1">
        <text>4 Fe(II)-[cytochrome c] + O2 + 8 H(+)(in) = 4 Fe(III)-[cytochrome c] + 2 H2O + 4 H(+)(out)</text>
        <dbReference type="Rhea" id="RHEA:11436"/>
        <dbReference type="Rhea" id="RHEA-COMP:10350"/>
        <dbReference type="Rhea" id="RHEA-COMP:14399"/>
        <dbReference type="ChEBI" id="CHEBI:15377"/>
        <dbReference type="ChEBI" id="CHEBI:15378"/>
        <dbReference type="ChEBI" id="CHEBI:15379"/>
        <dbReference type="ChEBI" id="CHEBI:29033"/>
        <dbReference type="ChEBI" id="CHEBI:29034"/>
        <dbReference type="EC" id="7.1.1.9"/>
    </reaction>
    <physiologicalReaction direction="left-to-right" evidence="1">
        <dbReference type="Rhea" id="RHEA:11437"/>
    </physiologicalReaction>
</comment>
<comment type="cofactor">
    <cofactor evidence="1">
        <name>Cu cation</name>
        <dbReference type="ChEBI" id="CHEBI:23378"/>
    </cofactor>
    <text evidence="1">Binds a dinuclear copper A center per subunit.</text>
</comment>
<comment type="subunit">
    <text evidence="1">Component of the cytochrome c oxidase (complex IV, CIV), a multisubunit enzyme composed of a catalytic core of 3 subunits and several supernumerary subunits. The complex exists as a monomer or a dimer and forms supercomplexes (SCs) in the inner mitochondrial membrane with ubiquinol-cytochrome c oxidoreductase (cytochrome b-c1 complex, complex III, CIII).</text>
</comment>
<comment type="subcellular location">
    <subcellularLocation>
        <location evidence="1">Mitochondrion inner membrane</location>
        <topology evidence="1">Multi-pass membrane protein</topology>
    </subcellularLocation>
</comment>
<comment type="similarity">
    <text evidence="3">Belongs to the cytochrome c oxidase subunit 2 family.</text>
</comment>
<reference key="1">
    <citation type="journal article" date="1993" name="J. Mol. Evol.">
        <title>Larger rearranged mitochondrial genomes in Dekkera/Brettanomyces yeasts are more closely related than smaller genomes with a conserved gene order.</title>
        <authorList>
            <person name="Hoeben P."/>
            <person name="Weiller G."/>
            <person name="Clark-Walker G.D."/>
        </authorList>
    </citation>
    <scope>NUCLEOTIDE SEQUENCE [GENOMIC DNA]</scope>
    <source>
        <strain>CBS 4805</strain>
    </source>
</reference>
<gene>
    <name type="primary">COX2</name>
</gene>
<sequence>MKEMMMSNMFNDVPTPWAMFFQDSATPNMEGMLELHNNVVFYLCMMLGFVTFMLYNMLTTYNKSVMPYKYLNQGQFMEMMWTTLPAVMLLMIAFPSFILLYMCDEVMAPAMTIKAMGLQWYWKYEYSDFMDEKGDTMEFESYMIPEDLLDEGQLRQLDVDAPIVCPVDTHIRFMVTAADVMHDFSVPSLGLKIDAVPGRLNQMSALMQREGVYYGQCSELCGVMHSSMPMKVEAVPTADFLAWIDEQ</sequence>
<protein>
    <recommendedName>
        <fullName>Cytochrome c oxidase subunit 2</fullName>
        <ecNumber>7.1.1.9</ecNumber>
    </recommendedName>
    <alternativeName>
        <fullName>Cytochrome c oxidase polypeptide II</fullName>
    </alternativeName>
</protein>
<dbReference type="EC" id="7.1.1.9"/>
<dbReference type="EMBL" id="X64826">
    <property type="protein sequence ID" value="CAA46038.1"/>
    <property type="molecule type" value="Genomic_DNA"/>
</dbReference>
<dbReference type="PIR" id="S33371">
    <property type="entry name" value="S33371"/>
</dbReference>
<dbReference type="RefSeq" id="YP_003127032.1">
    <property type="nucleotide sequence ID" value="NC_013145.2"/>
</dbReference>
<dbReference type="SMR" id="P43370"/>
<dbReference type="GeneID" id="8363661"/>
<dbReference type="GO" id="GO:0005743">
    <property type="term" value="C:mitochondrial inner membrane"/>
    <property type="evidence" value="ECO:0007669"/>
    <property type="project" value="UniProtKB-SubCell"/>
</dbReference>
<dbReference type="GO" id="GO:0005507">
    <property type="term" value="F:copper ion binding"/>
    <property type="evidence" value="ECO:0007669"/>
    <property type="project" value="InterPro"/>
</dbReference>
<dbReference type="GO" id="GO:0004129">
    <property type="term" value="F:cytochrome-c oxidase activity"/>
    <property type="evidence" value="ECO:0007669"/>
    <property type="project" value="UniProtKB-EC"/>
</dbReference>
<dbReference type="GO" id="GO:0042773">
    <property type="term" value="P:ATP synthesis coupled electron transport"/>
    <property type="evidence" value="ECO:0007669"/>
    <property type="project" value="TreeGrafter"/>
</dbReference>
<dbReference type="CDD" id="cd13912">
    <property type="entry name" value="CcO_II_C"/>
    <property type="match status" value="1"/>
</dbReference>
<dbReference type="FunFam" id="2.60.40.420:FF:000001">
    <property type="entry name" value="Cytochrome c oxidase subunit 2"/>
    <property type="match status" value="1"/>
</dbReference>
<dbReference type="Gene3D" id="1.10.287.90">
    <property type="match status" value="1"/>
</dbReference>
<dbReference type="Gene3D" id="2.60.40.420">
    <property type="entry name" value="Cupredoxins - blue copper proteins"/>
    <property type="match status" value="1"/>
</dbReference>
<dbReference type="InterPro" id="IPR045187">
    <property type="entry name" value="CcO_II"/>
</dbReference>
<dbReference type="InterPro" id="IPR002429">
    <property type="entry name" value="CcO_II-like_C"/>
</dbReference>
<dbReference type="InterPro" id="IPR034210">
    <property type="entry name" value="CcO_II_C"/>
</dbReference>
<dbReference type="InterPro" id="IPR001505">
    <property type="entry name" value="Copper_CuA"/>
</dbReference>
<dbReference type="InterPro" id="IPR008972">
    <property type="entry name" value="Cupredoxin"/>
</dbReference>
<dbReference type="InterPro" id="IPR014222">
    <property type="entry name" value="Cyt_c_oxidase_su2"/>
</dbReference>
<dbReference type="InterPro" id="IPR011759">
    <property type="entry name" value="Cyt_c_oxidase_su2_TM_dom"/>
</dbReference>
<dbReference type="InterPro" id="IPR036257">
    <property type="entry name" value="Cyt_c_oxidase_su2_TM_sf"/>
</dbReference>
<dbReference type="NCBIfam" id="TIGR02866">
    <property type="entry name" value="CoxB"/>
    <property type="match status" value="1"/>
</dbReference>
<dbReference type="PANTHER" id="PTHR22888:SF9">
    <property type="entry name" value="CYTOCHROME C OXIDASE SUBUNIT 2"/>
    <property type="match status" value="1"/>
</dbReference>
<dbReference type="PANTHER" id="PTHR22888">
    <property type="entry name" value="CYTOCHROME C OXIDASE, SUBUNIT II"/>
    <property type="match status" value="1"/>
</dbReference>
<dbReference type="Pfam" id="PF00116">
    <property type="entry name" value="COX2"/>
    <property type="match status" value="1"/>
</dbReference>
<dbReference type="Pfam" id="PF02790">
    <property type="entry name" value="COX2_TM"/>
    <property type="match status" value="1"/>
</dbReference>
<dbReference type="PRINTS" id="PR01166">
    <property type="entry name" value="CYCOXIDASEII"/>
</dbReference>
<dbReference type="SUPFAM" id="SSF49503">
    <property type="entry name" value="Cupredoxins"/>
    <property type="match status" value="1"/>
</dbReference>
<dbReference type="SUPFAM" id="SSF81464">
    <property type="entry name" value="Cytochrome c oxidase subunit II-like, transmembrane region"/>
    <property type="match status" value="1"/>
</dbReference>
<dbReference type="PROSITE" id="PS00078">
    <property type="entry name" value="COX2"/>
    <property type="match status" value="1"/>
</dbReference>
<dbReference type="PROSITE" id="PS50857">
    <property type="entry name" value="COX2_CUA"/>
    <property type="match status" value="1"/>
</dbReference>
<dbReference type="PROSITE" id="PS50999">
    <property type="entry name" value="COX2_TM"/>
    <property type="match status" value="1"/>
</dbReference>
<accession>P43370</accession>
<proteinExistence type="inferred from homology"/>